<organism>
    <name type="scientific">Escherichia fergusonii (strain ATCC 35469 / DSM 13698 / CCUG 18766 / IAM 14443 / JCM 21226 / LMG 7866 / NBRC 102419 / NCTC 12128 / CDC 0568-73)</name>
    <dbReference type="NCBI Taxonomy" id="585054"/>
    <lineage>
        <taxon>Bacteria</taxon>
        <taxon>Pseudomonadati</taxon>
        <taxon>Pseudomonadota</taxon>
        <taxon>Gammaproteobacteria</taxon>
        <taxon>Enterobacterales</taxon>
        <taxon>Enterobacteriaceae</taxon>
        <taxon>Escherichia</taxon>
    </lineage>
</organism>
<gene>
    <name evidence="1" type="primary">rnhB</name>
    <name type="ordered locus">EFER_0206</name>
</gene>
<name>RNH2_ESCF3</name>
<proteinExistence type="inferred from homology"/>
<keyword id="KW-0963">Cytoplasm</keyword>
<keyword id="KW-0255">Endonuclease</keyword>
<keyword id="KW-0378">Hydrolase</keyword>
<keyword id="KW-0464">Manganese</keyword>
<keyword id="KW-0479">Metal-binding</keyword>
<keyword id="KW-0540">Nuclease</keyword>
<evidence type="ECO:0000255" key="1">
    <source>
        <dbReference type="HAMAP-Rule" id="MF_00052"/>
    </source>
</evidence>
<evidence type="ECO:0000255" key="2">
    <source>
        <dbReference type="PROSITE-ProRule" id="PRU01319"/>
    </source>
</evidence>
<comment type="function">
    <text evidence="1">Endonuclease that specifically degrades the RNA of RNA-DNA hybrids.</text>
</comment>
<comment type="catalytic activity">
    <reaction evidence="1">
        <text>Endonucleolytic cleavage to 5'-phosphomonoester.</text>
        <dbReference type="EC" id="3.1.26.4"/>
    </reaction>
</comment>
<comment type="cofactor">
    <cofactor evidence="1">
        <name>Mn(2+)</name>
        <dbReference type="ChEBI" id="CHEBI:29035"/>
    </cofactor>
    <cofactor evidence="1">
        <name>Mg(2+)</name>
        <dbReference type="ChEBI" id="CHEBI:18420"/>
    </cofactor>
    <text evidence="1">Manganese or magnesium. Binds 1 divalent metal ion per monomer in the absence of substrate. May bind a second metal ion after substrate binding.</text>
</comment>
<comment type="subcellular location">
    <subcellularLocation>
        <location evidence="1">Cytoplasm</location>
    </subcellularLocation>
</comment>
<comment type="similarity">
    <text evidence="1">Belongs to the RNase HII family.</text>
</comment>
<reference key="1">
    <citation type="journal article" date="2009" name="PLoS Genet.">
        <title>Organised genome dynamics in the Escherichia coli species results in highly diverse adaptive paths.</title>
        <authorList>
            <person name="Touchon M."/>
            <person name="Hoede C."/>
            <person name="Tenaillon O."/>
            <person name="Barbe V."/>
            <person name="Baeriswyl S."/>
            <person name="Bidet P."/>
            <person name="Bingen E."/>
            <person name="Bonacorsi S."/>
            <person name="Bouchier C."/>
            <person name="Bouvet O."/>
            <person name="Calteau A."/>
            <person name="Chiapello H."/>
            <person name="Clermont O."/>
            <person name="Cruveiller S."/>
            <person name="Danchin A."/>
            <person name="Diard M."/>
            <person name="Dossat C."/>
            <person name="Karoui M.E."/>
            <person name="Frapy E."/>
            <person name="Garry L."/>
            <person name="Ghigo J.M."/>
            <person name="Gilles A.M."/>
            <person name="Johnson J."/>
            <person name="Le Bouguenec C."/>
            <person name="Lescat M."/>
            <person name="Mangenot S."/>
            <person name="Martinez-Jehanne V."/>
            <person name="Matic I."/>
            <person name="Nassif X."/>
            <person name="Oztas S."/>
            <person name="Petit M.A."/>
            <person name="Pichon C."/>
            <person name="Rouy Z."/>
            <person name="Ruf C.S."/>
            <person name="Schneider D."/>
            <person name="Tourret J."/>
            <person name="Vacherie B."/>
            <person name="Vallenet D."/>
            <person name="Medigue C."/>
            <person name="Rocha E.P.C."/>
            <person name="Denamur E."/>
        </authorList>
    </citation>
    <scope>NUCLEOTIDE SEQUENCE [LARGE SCALE GENOMIC DNA]</scope>
    <source>
        <strain>ATCC 35469 / DSM 13698 / BCRC 15582 / CCUG 18766 / IAM 14443 / JCM 21226 / LMG 7866 / NBRC 102419 / NCTC 12128 / CDC 0568-73</strain>
    </source>
</reference>
<accession>B7LW62</accession>
<protein>
    <recommendedName>
        <fullName evidence="1">Ribonuclease HII</fullName>
        <shortName evidence="1">RNase HII</shortName>
        <ecNumber evidence="1">3.1.26.4</ecNumber>
    </recommendedName>
</protein>
<feature type="chain" id="PRO_1000116848" description="Ribonuclease HII">
    <location>
        <begin position="1"/>
        <end position="198"/>
    </location>
</feature>
<feature type="domain" description="RNase H type-2" evidence="2">
    <location>
        <begin position="10"/>
        <end position="198"/>
    </location>
</feature>
<feature type="binding site" evidence="1">
    <location>
        <position position="16"/>
    </location>
    <ligand>
        <name>a divalent metal cation</name>
        <dbReference type="ChEBI" id="CHEBI:60240"/>
    </ligand>
</feature>
<feature type="binding site" evidence="1">
    <location>
        <position position="17"/>
    </location>
    <ligand>
        <name>a divalent metal cation</name>
        <dbReference type="ChEBI" id="CHEBI:60240"/>
    </ligand>
</feature>
<feature type="binding site" evidence="1">
    <location>
        <position position="108"/>
    </location>
    <ligand>
        <name>a divalent metal cation</name>
        <dbReference type="ChEBI" id="CHEBI:60240"/>
    </ligand>
</feature>
<dbReference type="EC" id="3.1.26.4" evidence="1"/>
<dbReference type="EMBL" id="CU928158">
    <property type="protein sequence ID" value="CAQ87786.1"/>
    <property type="molecule type" value="Genomic_DNA"/>
</dbReference>
<dbReference type="RefSeq" id="WP_000569420.1">
    <property type="nucleotide sequence ID" value="NC_011740.1"/>
</dbReference>
<dbReference type="SMR" id="B7LW62"/>
<dbReference type="GeneID" id="75058710"/>
<dbReference type="KEGG" id="efe:EFER_0206"/>
<dbReference type="HOGENOM" id="CLU_036532_3_2_6"/>
<dbReference type="OrthoDB" id="9803420at2"/>
<dbReference type="Proteomes" id="UP000000745">
    <property type="component" value="Chromosome"/>
</dbReference>
<dbReference type="GO" id="GO:0005737">
    <property type="term" value="C:cytoplasm"/>
    <property type="evidence" value="ECO:0007669"/>
    <property type="project" value="UniProtKB-SubCell"/>
</dbReference>
<dbReference type="GO" id="GO:0032299">
    <property type="term" value="C:ribonuclease H2 complex"/>
    <property type="evidence" value="ECO:0007669"/>
    <property type="project" value="TreeGrafter"/>
</dbReference>
<dbReference type="GO" id="GO:0030145">
    <property type="term" value="F:manganese ion binding"/>
    <property type="evidence" value="ECO:0007669"/>
    <property type="project" value="UniProtKB-UniRule"/>
</dbReference>
<dbReference type="GO" id="GO:0003723">
    <property type="term" value="F:RNA binding"/>
    <property type="evidence" value="ECO:0007669"/>
    <property type="project" value="InterPro"/>
</dbReference>
<dbReference type="GO" id="GO:0004523">
    <property type="term" value="F:RNA-DNA hybrid ribonuclease activity"/>
    <property type="evidence" value="ECO:0007669"/>
    <property type="project" value="UniProtKB-UniRule"/>
</dbReference>
<dbReference type="GO" id="GO:0043137">
    <property type="term" value="P:DNA replication, removal of RNA primer"/>
    <property type="evidence" value="ECO:0007669"/>
    <property type="project" value="TreeGrafter"/>
</dbReference>
<dbReference type="GO" id="GO:0006298">
    <property type="term" value="P:mismatch repair"/>
    <property type="evidence" value="ECO:0007669"/>
    <property type="project" value="TreeGrafter"/>
</dbReference>
<dbReference type="CDD" id="cd07182">
    <property type="entry name" value="RNase_HII_bacteria_HII_like"/>
    <property type="match status" value="1"/>
</dbReference>
<dbReference type="FunFam" id="3.30.420.10:FF:000006">
    <property type="entry name" value="Ribonuclease HII"/>
    <property type="match status" value="1"/>
</dbReference>
<dbReference type="Gene3D" id="3.30.420.10">
    <property type="entry name" value="Ribonuclease H-like superfamily/Ribonuclease H"/>
    <property type="match status" value="1"/>
</dbReference>
<dbReference type="HAMAP" id="MF_00052_B">
    <property type="entry name" value="RNase_HII_B"/>
    <property type="match status" value="1"/>
</dbReference>
<dbReference type="InterPro" id="IPR022898">
    <property type="entry name" value="RNase_HII"/>
</dbReference>
<dbReference type="InterPro" id="IPR001352">
    <property type="entry name" value="RNase_HII/HIII"/>
</dbReference>
<dbReference type="InterPro" id="IPR024567">
    <property type="entry name" value="RNase_HII/HIII_dom"/>
</dbReference>
<dbReference type="InterPro" id="IPR012337">
    <property type="entry name" value="RNaseH-like_sf"/>
</dbReference>
<dbReference type="InterPro" id="IPR036397">
    <property type="entry name" value="RNaseH_sf"/>
</dbReference>
<dbReference type="NCBIfam" id="NF000594">
    <property type="entry name" value="PRK00015.1-1"/>
    <property type="match status" value="1"/>
</dbReference>
<dbReference type="NCBIfam" id="NF000595">
    <property type="entry name" value="PRK00015.1-3"/>
    <property type="match status" value="1"/>
</dbReference>
<dbReference type="NCBIfam" id="NF000596">
    <property type="entry name" value="PRK00015.1-4"/>
    <property type="match status" value="1"/>
</dbReference>
<dbReference type="PANTHER" id="PTHR10954">
    <property type="entry name" value="RIBONUCLEASE H2 SUBUNIT A"/>
    <property type="match status" value="1"/>
</dbReference>
<dbReference type="PANTHER" id="PTHR10954:SF18">
    <property type="entry name" value="RIBONUCLEASE HII"/>
    <property type="match status" value="1"/>
</dbReference>
<dbReference type="Pfam" id="PF01351">
    <property type="entry name" value="RNase_HII"/>
    <property type="match status" value="1"/>
</dbReference>
<dbReference type="SUPFAM" id="SSF53098">
    <property type="entry name" value="Ribonuclease H-like"/>
    <property type="match status" value="1"/>
</dbReference>
<dbReference type="PROSITE" id="PS51975">
    <property type="entry name" value="RNASE_H_2"/>
    <property type="match status" value="1"/>
</dbReference>
<sequence>MIEFVYPHTQLVAGVDEVGRGPLVGAVVTAAVILDPARPIAGLNDSKKLSEKRRLALCEEIKEKALSWSLGRAEPHEIDELNILHATMLAMQRAVAGLHIAPEYVLIDGNRCPKLPMPAMAVVKGDSRVPEISAASILAKVTRDAEMAALDIVFPQYGFAQHKGYPTAFHLEKLAEYGATEHHRRSFGPVKRALGLAS</sequence>